<keyword id="KW-0009">Actin-binding</keyword>
<keyword id="KW-0067">ATP-binding</keyword>
<keyword id="KW-0175">Coiled coil</keyword>
<keyword id="KW-0963">Cytoplasm</keyword>
<keyword id="KW-0206">Cytoskeleton</keyword>
<keyword id="KW-0493">Microtubule</keyword>
<keyword id="KW-0505">Motor protein</keyword>
<keyword id="KW-0547">Nucleotide-binding</keyword>
<keyword id="KW-1185">Reference proteome</keyword>
<sequence>MMAAAVEEEEMVERMHGWARDMDVASRRAEEEAMRRYDAASWLRSTVGVVCARDLPDEPSEEEFRLGLRNGIVLCNALNKIQPGAIPKVVQAQSDAAGPTDGSALCAYQYFENLRNFLVVVEDLRLPTFEVSDLEKGGKGVRVVDCVLALKSFSESNKTGRQASCKYGGLSKPLTARKYFILKNTDAFMNKIMKGHSAEAIQSEFSEGQSIVTDFSIESNEMTTSDSLSILLRKVLLDKKPEEVPLIVESILSKVIQEYEHRIAIQNKMDEEEQNLLNITEQVNHVVVNGDGEVKQFQLEAQTNFDVQQKQIQELKGALSFVKSGMEQLRLQYSEEFAKLGKHFYTLSNAASSYHKVLEENRKLYNQIQDLKGNIRVYCRVRPFLPGHRSLSSSVADTEERTITIITPTKYGKDGCKSFSFNRVFGPASTQEEVFSDMQPLIRSVLDGFNVCIFAYGQTGSGKTFTMSGPKVLTEESLGVNYRALNDLFNIKAQRKGTIDYEISVQMIEIYNEQVRDLLQDGGNRRLEIRNTPQKGLAVPDASIVPVTSTADVVELMNQGQKNRAVGSTAINDRSSRSHSCLSVHVQGKYLTSGAMLRGCMHLVDLAGSERVDKSEVVGDRLKEAQYINKSLSALGDVIASLAQKNSHVPYRNSKLTQLLQDSLGGQAKTLMFVHVSPELDAVGETISTLKFAERVASVELGAAKANKEGSEVRELKEQIATLKAALAKKEGEPENIQSTQSSPDMYRIKRGNAIPAFPKNRQPMEEVGNLEVRNNATPMQKKASFQFSGVLSENNSSDLAENCNGIQKTDRMAVGNNQFENGNSILELEPGATQLPTFFYQRYDPDKQRRRAEPVETDDSDSFDAATSSPSDQEMLLSTSGLKADGIASRGAFIIKKPQTKNTKITATKIPNLAMKSPMSEKRLQTPIRNSKQLPFSTTGGRRTRNGKINTPK</sequence>
<evidence type="ECO:0000255" key="1"/>
<evidence type="ECO:0000255" key="2">
    <source>
        <dbReference type="PROSITE-ProRule" id="PRU00044"/>
    </source>
</evidence>
<evidence type="ECO:0000255" key="3">
    <source>
        <dbReference type="PROSITE-ProRule" id="PRU00283"/>
    </source>
</evidence>
<evidence type="ECO:0000256" key="4">
    <source>
        <dbReference type="SAM" id="MobiDB-lite"/>
    </source>
</evidence>
<evidence type="ECO:0000269" key="5">
    <source>
    </source>
</evidence>
<evidence type="ECO:0000269" key="6">
    <source>
    </source>
</evidence>
<evidence type="ECO:0000269" key="7">
    <source>
    </source>
</evidence>
<evidence type="ECO:0000269" key="8">
    <source>
    </source>
</evidence>
<evidence type="ECO:0000303" key="9">
    <source>
    </source>
</evidence>
<evidence type="ECO:0000303" key="10">
    <source>
    </source>
</evidence>
<evidence type="ECO:0000305" key="11"/>
<evidence type="ECO:0000312" key="12">
    <source>
        <dbReference type="EMBL" id="ABA98869.1"/>
    </source>
</evidence>
<evidence type="ECO:0000312" key="13">
    <source>
        <dbReference type="EMBL" id="BAT17539.1"/>
    </source>
</evidence>
<evidence type="ECO:0000312" key="14">
    <source>
        <dbReference type="EMBL" id="EEE53371.1"/>
    </source>
</evidence>
<accession>Q0IMS9</accession>
<accession>B9GDL4</accession>
<accession>Q2QP07</accession>
<gene>
    <name evidence="11" type="primary">KIN14Q</name>
    <name evidence="10" type="synonym">KCH1</name>
    <name type="synonym">O12</name>
    <name evidence="13" type="ordered locus">Os12g0547500</name>
    <name evidence="12" type="ordered locus">LOC_Os12g36100</name>
    <name evidence="14" type="ORF">OsJ_36410</name>
</gene>
<reference key="1">
    <citation type="journal article" date="2005" name="BMC Biol.">
        <title>The sequence of rice chromosomes 11 and 12, rich in disease resistance genes and recent gene duplications.</title>
        <authorList>
            <consortium name="The rice chromosomes 11 and 12 sequencing consortia"/>
        </authorList>
    </citation>
    <scope>NUCLEOTIDE SEQUENCE [LARGE SCALE GENOMIC DNA]</scope>
    <source>
        <strain>cv. Nipponbare</strain>
    </source>
</reference>
<reference key="2">
    <citation type="journal article" date="2005" name="Nature">
        <title>The map-based sequence of the rice genome.</title>
        <authorList>
            <consortium name="International rice genome sequencing project (IRGSP)"/>
        </authorList>
    </citation>
    <scope>NUCLEOTIDE SEQUENCE [LARGE SCALE GENOMIC DNA]</scope>
    <source>
        <strain>cv. Nipponbare</strain>
    </source>
</reference>
<reference key="3">
    <citation type="journal article" date="2008" name="Nucleic Acids Res.">
        <title>The rice annotation project database (RAP-DB): 2008 update.</title>
        <authorList>
            <consortium name="The rice annotation project (RAP)"/>
        </authorList>
    </citation>
    <scope>GENOME REANNOTATION</scope>
    <source>
        <strain>cv. Nipponbare</strain>
    </source>
</reference>
<reference key="4">
    <citation type="journal article" date="2013" name="Rice">
        <title>Improvement of the Oryza sativa Nipponbare reference genome using next generation sequence and optical map data.</title>
        <authorList>
            <person name="Kawahara Y."/>
            <person name="de la Bastide M."/>
            <person name="Hamilton J.P."/>
            <person name="Kanamori H."/>
            <person name="McCombie W.R."/>
            <person name="Ouyang S."/>
            <person name="Schwartz D.C."/>
            <person name="Tanaka T."/>
            <person name="Wu J."/>
            <person name="Zhou S."/>
            <person name="Childs K.L."/>
            <person name="Davidson R.M."/>
            <person name="Lin H."/>
            <person name="Quesada-Ocampo L."/>
            <person name="Vaillancourt B."/>
            <person name="Sakai H."/>
            <person name="Lee S.S."/>
            <person name="Kim J."/>
            <person name="Numa H."/>
            <person name="Itoh T."/>
            <person name="Buell C.R."/>
            <person name="Matsumoto T."/>
        </authorList>
    </citation>
    <scope>GENOME REANNOTATION</scope>
    <source>
        <strain>cv. Nipponbare</strain>
    </source>
</reference>
<reference key="5">
    <citation type="journal article" date="2005" name="PLoS Biol.">
        <title>The genomes of Oryza sativa: a history of duplications.</title>
        <authorList>
            <person name="Yu J."/>
            <person name="Wang J."/>
            <person name="Lin W."/>
            <person name="Li S."/>
            <person name="Li H."/>
            <person name="Zhou J."/>
            <person name="Ni P."/>
            <person name="Dong W."/>
            <person name="Hu S."/>
            <person name="Zeng C."/>
            <person name="Zhang J."/>
            <person name="Zhang Y."/>
            <person name="Li R."/>
            <person name="Xu Z."/>
            <person name="Li S."/>
            <person name="Li X."/>
            <person name="Zheng H."/>
            <person name="Cong L."/>
            <person name="Lin L."/>
            <person name="Yin J."/>
            <person name="Geng J."/>
            <person name="Li G."/>
            <person name="Shi J."/>
            <person name="Liu J."/>
            <person name="Lv H."/>
            <person name="Li J."/>
            <person name="Wang J."/>
            <person name="Deng Y."/>
            <person name="Ran L."/>
            <person name="Shi X."/>
            <person name="Wang X."/>
            <person name="Wu Q."/>
            <person name="Li C."/>
            <person name="Ren X."/>
            <person name="Wang J."/>
            <person name="Wang X."/>
            <person name="Li D."/>
            <person name="Liu D."/>
            <person name="Zhang X."/>
            <person name="Ji Z."/>
            <person name="Zhao W."/>
            <person name="Sun Y."/>
            <person name="Zhang Z."/>
            <person name="Bao J."/>
            <person name="Han Y."/>
            <person name="Dong L."/>
            <person name="Ji J."/>
            <person name="Chen P."/>
            <person name="Wu S."/>
            <person name="Liu J."/>
            <person name="Xiao Y."/>
            <person name="Bu D."/>
            <person name="Tan J."/>
            <person name="Yang L."/>
            <person name="Ye C."/>
            <person name="Zhang J."/>
            <person name="Xu J."/>
            <person name="Zhou Y."/>
            <person name="Yu Y."/>
            <person name="Zhang B."/>
            <person name="Zhuang S."/>
            <person name="Wei H."/>
            <person name="Liu B."/>
            <person name="Lei M."/>
            <person name="Yu H."/>
            <person name="Li Y."/>
            <person name="Xu H."/>
            <person name="Wei S."/>
            <person name="He X."/>
            <person name="Fang L."/>
            <person name="Zhang Z."/>
            <person name="Zhang Y."/>
            <person name="Huang X."/>
            <person name="Su Z."/>
            <person name="Tong W."/>
            <person name="Li J."/>
            <person name="Tong Z."/>
            <person name="Li S."/>
            <person name="Ye J."/>
            <person name="Wang L."/>
            <person name="Fang L."/>
            <person name="Lei T."/>
            <person name="Chen C.-S."/>
            <person name="Chen H.-C."/>
            <person name="Xu Z."/>
            <person name="Li H."/>
            <person name="Huang H."/>
            <person name="Zhang F."/>
            <person name="Xu H."/>
            <person name="Li N."/>
            <person name="Zhao C."/>
            <person name="Li S."/>
            <person name="Dong L."/>
            <person name="Huang Y."/>
            <person name="Li L."/>
            <person name="Xi Y."/>
            <person name="Qi Q."/>
            <person name="Li W."/>
            <person name="Zhang B."/>
            <person name="Hu W."/>
            <person name="Zhang Y."/>
            <person name="Tian X."/>
            <person name="Jiao Y."/>
            <person name="Liang X."/>
            <person name="Jin J."/>
            <person name="Gao L."/>
            <person name="Zheng W."/>
            <person name="Hao B."/>
            <person name="Liu S.-M."/>
            <person name="Wang W."/>
            <person name="Yuan L."/>
            <person name="Cao M."/>
            <person name="McDermott J."/>
            <person name="Samudrala R."/>
            <person name="Wang J."/>
            <person name="Wong G.K.-S."/>
            <person name="Yang H."/>
        </authorList>
    </citation>
    <scope>NUCLEOTIDE SEQUENCE [LARGE SCALE GENOMIC DNA]</scope>
    <source>
        <strain>cv. Nipponbare</strain>
    </source>
</reference>
<reference key="6">
    <citation type="journal article" date="2003" name="Science">
        <title>Collection, mapping, and annotation of over 28,000 cDNA clones from japonica rice.</title>
        <authorList>
            <consortium name="The rice full-length cDNA consortium"/>
        </authorList>
    </citation>
    <scope>NUCLEOTIDE SEQUENCE [LARGE SCALE MRNA]</scope>
    <source>
        <strain>cv. Nipponbare</strain>
    </source>
</reference>
<reference key="7">
    <citation type="journal article" date="2009" name="Ann. Bot.">
        <title>Evaluating the microtubule cytoskeleton and its interacting proteins in monocots by mining the rice genome.</title>
        <authorList>
            <person name="Guo L."/>
            <person name="Ho C.M."/>
            <person name="Kong Z."/>
            <person name="Lee Y.R."/>
            <person name="Qian Q."/>
            <person name="Liu B."/>
        </authorList>
    </citation>
    <scope>GENE FAMILY</scope>
    <scope>NOMENCLATURE</scope>
</reference>
<reference key="8">
    <citation type="journal article" date="2009" name="Plant Cell Physiol.">
        <title>Dynamic bridges--a calponin-domain kinesin from rice links actin filaments and microtubules in both cycling and non-cycling cells.</title>
        <authorList>
            <person name="Frey N."/>
            <person name="Klotz J."/>
            <person name="Nick P."/>
        </authorList>
    </citation>
    <scope>FUNCTION</scope>
    <scope>SUBUNIT</scope>
    <scope>SUBCELLULAR LOCATION</scope>
</reference>
<reference key="9">
    <citation type="journal article" date="2010" name="J. Exp. Bot.">
        <title>A kinesin with calponin-homology domain is involved in premitotic nuclear migration.</title>
        <authorList>
            <person name="Frey N."/>
            <person name="Klotz J."/>
            <person name="Nick P."/>
        </authorList>
    </citation>
    <scope>FUNCTION</scope>
    <scope>TISSUE SPECIFICITY</scope>
    <scope>DISRUPTION PHENOTYPE</scope>
</reference>
<reference key="10">
    <citation type="journal article" date="2011" name="J. Biochem.">
        <title>Characterization of a novel rice kinesin O12 with a calponin homology domain.</title>
        <authorList>
            <person name="Umezu N."/>
            <person name="Umeki N."/>
            <person name="Mitsui T."/>
            <person name="Kondo K."/>
            <person name="Maruta S."/>
        </authorList>
    </citation>
    <scope>BIOPHYSICOCHEMICAL PROPERTIES</scope>
    <scope>ACTIVITY REGULATION</scope>
    <scope>INTERACTION WITH ACTIN</scope>
    <scope>SUBCELLULAR LOCATION</scope>
</reference>
<reference key="11">
    <citation type="journal article" date="2012" name="J. Biochem.">
        <title>Rice kinesin O12 is identical to kinesin OsKCH1.</title>
        <authorList>
            <person name="Umezu N."/>
            <person name="Umeki N."/>
            <person name="Mitsui T."/>
            <person name="Kondo K."/>
            <person name="Maruta S."/>
        </authorList>
    </citation>
    <scope>IDENTIFICATION</scope>
</reference>
<reference key="12">
    <citation type="journal article" date="2015" name="Nat. Plants">
        <title>The non-processive rice kinesin-14 OsKCH1 transports actin filaments along microtubules with two distinct velocities.</title>
        <authorList>
            <person name="Walter W.J."/>
            <person name="Machens I."/>
            <person name="Rafieian F."/>
            <person name="Diez S."/>
        </authorList>
    </citation>
    <scope>FUNCTION</scope>
    <scope>INTERACTION WITH ACTIN</scope>
    <scope>ACTIVITY REGULATION</scope>
</reference>
<organism>
    <name type="scientific">Oryza sativa subsp. japonica</name>
    <name type="common">Rice</name>
    <dbReference type="NCBI Taxonomy" id="39947"/>
    <lineage>
        <taxon>Eukaryota</taxon>
        <taxon>Viridiplantae</taxon>
        <taxon>Streptophyta</taxon>
        <taxon>Embryophyta</taxon>
        <taxon>Tracheophyta</taxon>
        <taxon>Spermatophyta</taxon>
        <taxon>Magnoliopsida</taxon>
        <taxon>Liliopsida</taxon>
        <taxon>Poales</taxon>
        <taxon>Poaceae</taxon>
        <taxon>BOP clade</taxon>
        <taxon>Oryzoideae</taxon>
        <taxon>Oryzeae</taxon>
        <taxon>Oryzinae</taxon>
        <taxon>Oryza</taxon>
        <taxon>Oryza sativa</taxon>
    </lineage>
</organism>
<name>KN14Q_ORYSJ</name>
<protein>
    <recommendedName>
        <fullName evidence="11">Kinesin-like protein KIN-14Q</fullName>
    </recommendedName>
    <alternativeName>
        <fullName>Kinesin O12</fullName>
    </alternativeName>
    <alternativeName>
        <fullName evidence="10">OsKCH1</fullName>
    </alternativeName>
</protein>
<comment type="function">
    <text evidence="5 6 8">Minus end-directed motor protein that transports actin filaments along microtubules. Plays a central role in the polar orientation of actin filaments along microtubules, and thus a contribution to the organization of the cytoskeletal architecture (PubMed:27250543). Links the actin microfilaments with the cortical microtubules in both cycling and non-cycling cells (PubMed:19561334). Required for efficient cell elongation by its participation in the premitotic nuclear positioning (PubMed:20566563).</text>
</comment>
<comment type="activity regulation">
    <text evidence="7 8">The microtubule-dependent ATPase activity is regulated by actin binding.</text>
</comment>
<comment type="biophysicochemical properties">
    <phDependence>
        <text evidence="7">Optimum pH is 6.5 for ATPase activity (in presence of microtubules).</text>
    </phDependence>
</comment>
<comment type="subunit">
    <text evidence="5 7 8">Forms oligomers in vitro. Interacts with actin microfilaments (PubMed:19561334, PubMed:27250543). Binds to actin in vitro through its calponin-homology (CH) domain (PubMed:21047815).</text>
</comment>
<comment type="subcellular location">
    <subcellularLocation>
        <location evidence="5 7">Cytoplasm</location>
        <location evidence="5 7">Cytoskeleton</location>
    </subcellularLocation>
    <text evidence="5">Colocalizes with cortical microtubules and longitudinally oriented actin microfilaments.</text>
</comment>
<comment type="tissue specificity">
    <text evidence="6">Expressed in primary leaf, primary root, developing flower and coleoptile.</text>
</comment>
<comment type="disruption phenotype">
    <text evidence="6">Shorter coleoptiles due to impaired cell expansion and increased division.</text>
</comment>
<comment type="similarity">
    <text evidence="9">Belongs to the TRAFAC class myosin-kinesin ATPase superfamily. Kinesin family. KIN-14 subfamily.</text>
</comment>
<comment type="sequence caution" evidence="11">
    <conflict type="erroneous gene model prediction">
        <sequence resource="EMBL-CDS" id="ABA98869"/>
    </conflict>
</comment>
<comment type="sequence caution" evidence="11">
    <conflict type="frameshift">
        <sequence resource="EMBL" id="AK065586"/>
    </conflict>
</comment>
<comment type="sequence caution" evidence="11">
    <conflict type="erroneous gene model prediction">
        <sequence resource="EMBL-CDS" id="EEE53371"/>
    </conflict>
</comment>
<feature type="chain" id="PRO_0000438642" description="Kinesin-like protein KIN-14Q">
    <location>
        <begin position="1"/>
        <end position="954"/>
    </location>
</feature>
<feature type="domain" description="Calponin-homology (CH)" evidence="2">
    <location>
        <begin position="33"/>
        <end position="155"/>
    </location>
</feature>
<feature type="domain" description="Kinesin motor" evidence="3">
    <location>
        <begin position="374"/>
        <end position="699"/>
    </location>
</feature>
<feature type="region of interest" description="Disordered" evidence="4">
    <location>
        <begin position="844"/>
        <end position="876"/>
    </location>
</feature>
<feature type="region of interest" description="Disordered" evidence="4">
    <location>
        <begin position="912"/>
        <end position="954"/>
    </location>
</feature>
<feature type="coiled-coil region" evidence="1">
    <location>
        <begin position="704"/>
        <end position="733"/>
    </location>
</feature>
<feature type="compositionally biased region" description="Basic and acidic residues" evidence="4">
    <location>
        <begin position="844"/>
        <end position="855"/>
    </location>
</feature>
<feature type="compositionally biased region" description="Low complexity" evidence="4">
    <location>
        <begin position="864"/>
        <end position="873"/>
    </location>
</feature>
<feature type="compositionally biased region" description="Polar residues" evidence="4">
    <location>
        <begin position="928"/>
        <end position="954"/>
    </location>
</feature>
<feature type="binding site" evidence="3">
    <location>
        <begin position="457"/>
        <end position="464"/>
    </location>
    <ligand>
        <name>ATP</name>
        <dbReference type="ChEBI" id="CHEBI:30616"/>
    </ligand>
</feature>
<dbReference type="EMBL" id="DP000011">
    <property type="protein sequence ID" value="ABA98869.1"/>
    <property type="status" value="ALT_SEQ"/>
    <property type="molecule type" value="Genomic_DNA"/>
</dbReference>
<dbReference type="EMBL" id="AP008218">
    <property type="protein sequence ID" value="BAF29986.1"/>
    <property type="molecule type" value="Genomic_DNA"/>
</dbReference>
<dbReference type="EMBL" id="AP014968">
    <property type="protein sequence ID" value="BAT17539.1"/>
    <property type="molecule type" value="Genomic_DNA"/>
</dbReference>
<dbReference type="EMBL" id="CM000149">
    <property type="protein sequence ID" value="EEE53371.1"/>
    <property type="status" value="ALT_SEQ"/>
    <property type="molecule type" value="Genomic_DNA"/>
</dbReference>
<dbReference type="EMBL" id="AK065586">
    <property type="status" value="NOT_ANNOTATED_CDS"/>
    <property type="molecule type" value="mRNA"/>
</dbReference>
<dbReference type="RefSeq" id="XP_015620619.1">
    <property type="nucleotide sequence ID" value="XM_015765133.1"/>
</dbReference>
<dbReference type="SMR" id="Q0IMS9"/>
<dbReference type="FunCoup" id="Q0IMS9">
    <property type="interactions" value="6"/>
</dbReference>
<dbReference type="STRING" id="39947.Q0IMS9"/>
<dbReference type="PaxDb" id="39947-Q0IMS9"/>
<dbReference type="EnsemblPlants" id="Os12t0547500-01">
    <property type="protein sequence ID" value="Os12t0547500-01"/>
    <property type="gene ID" value="Os12g0547500"/>
</dbReference>
<dbReference type="Gramene" id="Os12t0547500-01">
    <property type="protein sequence ID" value="Os12t0547500-01"/>
    <property type="gene ID" value="Os12g0547500"/>
</dbReference>
<dbReference type="KEGG" id="dosa:Os12g0547500"/>
<dbReference type="eggNOG" id="KOG0239">
    <property type="taxonomic scope" value="Eukaryota"/>
</dbReference>
<dbReference type="HOGENOM" id="CLU_001485_8_0_1"/>
<dbReference type="InParanoid" id="Q0IMS9"/>
<dbReference type="OMA" id="FPKNRQP"/>
<dbReference type="OrthoDB" id="3176171at2759"/>
<dbReference type="Proteomes" id="UP000000763">
    <property type="component" value="Chromosome 12"/>
</dbReference>
<dbReference type="Proteomes" id="UP000007752">
    <property type="component" value="Chromosome 12"/>
</dbReference>
<dbReference type="Proteomes" id="UP000059680">
    <property type="component" value="Chromosome 12"/>
</dbReference>
<dbReference type="GO" id="GO:0015629">
    <property type="term" value="C:actin cytoskeleton"/>
    <property type="evidence" value="ECO:0000314"/>
    <property type="project" value="UniProtKB"/>
</dbReference>
<dbReference type="GO" id="GO:0005737">
    <property type="term" value="C:cytoplasm"/>
    <property type="evidence" value="ECO:0007669"/>
    <property type="project" value="UniProtKB-KW"/>
</dbReference>
<dbReference type="GO" id="GO:0005874">
    <property type="term" value="C:microtubule"/>
    <property type="evidence" value="ECO:0007669"/>
    <property type="project" value="UniProtKB-KW"/>
</dbReference>
<dbReference type="GO" id="GO:0015630">
    <property type="term" value="C:microtubule cytoskeleton"/>
    <property type="evidence" value="ECO:0000314"/>
    <property type="project" value="UniProtKB"/>
</dbReference>
<dbReference type="GO" id="GO:0003779">
    <property type="term" value="F:actin binding"/>
    <property type="evidence" value="ECO:0000314"/>
    <property type="project" value="UniProtKB"/>
</dbReference>
<dbReference type="GO" id="GO:0005524">
    <property type="term" value="F:ATP binding"/>
    <property type="evidence" value="ECO:0007669"/>
    <property type="project" value="UniProtKB-KW"/>
</dbReference>
<dbReference type="GO" id="GO:0016887">
    <property type="term" value="F:ATP hydrolysis activity"/>
    <property type="evidence" value="ECO:0000314"/>
    <property type="project" value="UniProtKB"/>
</dbReference>
<dbReference type="GO" id="GO:0008017">
    <property type="term" value="F:microtubule binding"/>
    <property type="evidence" value="ECO:0000314"/>
    <property type="project" value="UniProtKB"/>
</dbReference>
<dbReference type="GO" id="GO:0003777">
    <property type="term" value="F:microtubule motor activity"/>
    <property type="evidence" value="ECO:0000314"/>
    <property type="project" value="UniProtKB"/>
</dbReference>
<dbReference type="GO" id="GO:0008569">
    <property type="term" value="F:minus-end-directed microtubule motor activity"/>
    <property type="evidence" value="ECO:0000314"/>
    <property type="project" value="UniProtKB"/>
</dbReference>
<dbReference type="GO" id="GO:0007018">
    <property type="term" value="P:microtubule-based movement"/>
    <property type="evidence" value="ECO:0000314"/>
    <property type="project" value="UniProtKB"/>
</dbReference>
<dbReference type="GO" id="GO:0007017">
    <property type="term" value="P:microtubule-based process"/>
    <property type="evidence" value="ECO:0000318"/>
    <property type="project" value="GO_Central"/>
</dbReference>
<dbReference type="GO" id="GO:0031534">
    <property type="term" value="P:minus-end directed microtubule sliding"/>
    <property type="evidence" value="ECO:0000314"/>
    <property type="project" value="UniProtKB"/>
</dbReference>
<dbReference type="GO" id="GO:0007097">
    <property type="term" value="P:nuclear migration"/>
    <property type="evidence" value="ECO:0000315"/>
    <property type="project" value="UniProtKB"/>
</dbReference>
<dbReference type="GO" id="GO:0051647">
    <property type="term" value="P:nucleus localization"/>
    <property type="evidence" value="ECO:0000315"/>
    <property type="project" value="UniProtKB"/>
</dbReference>
<dbReference type="CDD" id="cd21203">
    <property type="entry name" value="CH_AtKIN14-like"/>
    <property type="match status" value="1"/>
</dbReference>
<dbReference type="CDD" id="cd01366">
    <property type="entry name" value="KISc_C_terminal"/>
    <property type="match status" value="1"/>
</dbReference>
<dbReference type="FunFam" id="3.40.850.10:FF:000045">
    <property type="entry name" value="Kinesin-like protein KIN-14I isoform A"/>
    <property type="match status" value="1"/>
</dbReference>
<dbReference type="FunFam" id="1.10.418.10:FF:000069">
    <property type="entry name" value="p-loop nucleoside triphosphate hydrolase superfamily protein with CH (Calponin Homology) domain"/>
    <property type="match status" value="1"/>
</dbReference>
<dbReference type="Gene3D" id="1.10.418.10">
    <property type="entry name" value="Calponin-like domain"/>
    <property type="match status" value="1"/>
</dbReference>
<dbReference type="Gene3D" id="3.40.850.10">
    <property type="entry name" value="Kinesin motor domain"/>
    <property type="match status" value="1"/>
</dbReference>
<dbReference type="InterPro" id="IPR001715">
    <property type="entry name" value="CH_dom"/>
</dbReference>
<dbReference type="InterPro" id="IPR036872">
    <property type="entry name" value="CH_dom_sf"/>
</dbReference>
<dbReference type="InterPro" id="IPR027640">
    <property type="entry name" value="Kinesin-like_fam"/>
</dbReference>
<dbReference type="InterPro" id="IPR001752">
    <property type="entry name" value="Kinesin_motor_dom"/>
</dbReference>
<dbReference type="InterPro" id="IPR036961">
    <property type="entry name" value="Kinesin_motor_dom_sf"/>
</dbReference>
<dbReference type="InterPro" id="IPR027417">
    <property type="entry name" value="P-loop_NTPase"/>
</dbReference>
<dbReference type="PANTHER" id="PTHR47972:SF31">
    <property type="entry name" value="KINESIN-LIKE PROTEIN KIN-14Q"/>
    <property type="match status" value="1"/>
</dbReference>
<dbReference type="PANTHER" id="PTHR47972">
    <property type="entry name" value="KINESIN-LIKE PROTEIN KLP-3"/>
    <property type="match status" value="1"/>
</dbReference>
<dbReference type="Pfam" id="PF00307">
    <property type="entry name" value="CH"/>
    <property type="match status" value="1"/>
</dbReference>
<dbReference type="Pfam" id="PF00225">
    <property type="entry name" value="Kinesin"/>
    <property type="match status" value="1"/>
</dbReference>
<dbReference type="PRINTS" id="PR00380">
    <property type="entry name" value="KINESINHEAVY"/>
</dbReference>
<dbReference type="SMART" id="SM00033">
    <property type="entry name" value="CH"/>
    <property type="match status" value="1"/>
</dbReference>
<dbReference type="SMART" id="SM00129">
    <property type="entry name" value="KISc"/>
    <property type="match status" value="1"/>
</dbReference>
<dbReference type="SUPFAM" id="SSF47576">
    <property type="entry name" value="Calponin-homology domain, CH-domain"/>
    <property type="match status" value="1"/>
</dbReference>
<dbReference type="SUPFAM" id="SSF52540">
    <property type="entry name" value="P-loop containing nucleoside triphosphate hydrolases"/>
    <property type="match status" value="1"/>
</dbReference>
<dbReference type="PROSITE" id="PS50021">
    <property type="entry name" value="CH"/>
    <property type="match status" value="1"/>
</dbReference>
<dbReference type="PROSITE" id="PS50067">
    <property type="entry name" value="KINESIN_MOTOR_2"/>
    <property type="match status" value="1"/>
</dbReference>
<proteinExistence type="evidence at protein level"/>